<protein>
    <recommendedName>
        <fullName evidence="1">Holliday junction branch migration complex subunit RuvA</fullName>
    </recommendedName>
</protein>
<proteinExistence type="inferred from homology"/>
<organism>
    <name type="scientific">Burkholderia thailandensis (strain ATCC 700388 / DSM 13276 / CCUG 48851 / CIP 106301 / E264)</name>
    <dbReference type="NCBI Taxonomy" id="271848"/>
    <lineage>
        <taxon>Bacteria</taxon>
        <taxon>Pseudomonadati</taxon>
        <taxon>Pseudomonadota</taxon>
        <taxon>Betaproteobacteria</taxon>
        <taxon>Burkholderiales</taxon>
        <taxon>Burkholderiaceae</taxon>
        <taxon>Burkholderia</taxon>
        <taxon>pseudomallei group</taxon>
    </lineage>
</organism>
<sequence length="193" mass="20295">MIGRIAGTLLEKNPPRILVDCNGVGYEVDVPMSTFYNLPHTGEKVVLLTQLIVREDAHLLYGFLTPQERSTFRELLKITGVGARMALAVLSGMSVAELSQAVTLQDAARLTRVPGIGKKTAERLLLELKGKLGADLGPLAGAASPSDHAADILNALLALGYSEKEALAAIKNVPAGTGVSEGIKLSLKALSKA</sequence>
<reference key="1">
    <citation type="journal article" date="2005" name="BMC Genomics">
        <title>Bacterial genome adaptation to niches: divergence of the potential virulence genes in three Burkholderia species of different survival strategies.</title>
        <authorList>
            <person name="Kim H.S."/>
            <person name="Schell M.A."/>
            <person name="Yu Y."/>
            <person name="Ulrich R.L."/>
            <person name="Sarria S.H."/>
            <person name="Nierman W.C."/>
            <person name="DeShazer D."/>
        </authorList>
    </citation>
    <scope>NUCLEOTIDE SEQUENCE [LARGE SCALE GENOMIC DNA]</scope>
    <source>
        <strain>ATCC 700388 / DSM 13276 / CCUG 48851 / CIP 106301 / E264</strain>
    </source>
</reference>
<comment type="function">
    <text evidence="1">The RuvA-RuvB-RuvC complex processes Holliday junction (HJ) DNA during genetic recombination and DNA repair, while the RuvA-RuvB complex plays an important role in the rescue of blocked DNA replication forks via replication fork reversal (RFR). RuvA specifically binds to HJ cruciform DNA, conferring on it an open structure. The RuvB hexamer acts as an ATP-dependent pump, pulling dsDNA into and through the RuvAB complex. HJ branch migration allows RuvC to scan DNA until it finds its consensus sequence, where it cleaves and resolves the cruciform DNA.</text>
</comment>
<comment type="subunit">
    <text evidence="1">Homotetramer. Forms an RuvA(8)-RuvB(12)-Holliday junction (HJ) complex. HJ DNA is sandwiched between 2 RuvA tetramers; dsDNA enters through RuvA and exits via RuvB. An RuvB hexamer assembles on each DNA strand where it exits the tetramer. Each RuvB hexamer is contacted by two RuvA subunits (via domain III) on 2 adjacent RuvB subunits; this complex drives branch migration. In the full resolvosome a probable DNA-RuvA(4)-RuvB(12)-RuvC(2) complex forms which resolves the HJ.</text>
</comment>
<comment type="subcellular location">
    <subcellularLocation>
        <location evidence="1">Cytoplasm</location>
    </subcellularLocation>
</comment>
<comment type="domain">
    <text evidence="1">Has three domains with a flexible linker between the domains II and III and assumes an 'L' shape. Domain III is highly mobile and contacts RuvB.</text>
</comment>
<comment type="similarity">
    <text evidence="1">Belongs to the RuvA family.</text>
</comment>
<accession>Q2SZ54</accession>
<gene>
    <name evidence="1" type="primary">ruvA</name>
    <name type="ordered locus">BTH_I1248</name>
</gene>
<name>RUVA_BURTA</name>
<dbReference type="EMBL" id="CP000086">
    <property type="protein sequence ID" value="ABC37100.1"/>
    <property type="molecule type" value="Genomic_DNA"/>
</dbReference>
<dbReference type="RefSeq" id="WP_009889142.1">
    <property type="nucleotide sequence ID" value="NZ_CP008785.1"/>
</dbReference>
<dbReference type="SMR" id="Q2SZ54"/>
<dbReference type="GeneID" id="45120995"/>
<dbReference type="KEGG" id="bte:BTH_I1248"/>
<dbReference type="HOGENOM" id="CLU_087936_0_0_4"/>
<dbReference type="Proteomes" id="UP000001930">
    <property type="component" value="Chromosome I"/>
</dbReference>
<dbReference type="GO" id="GO:0005737">
    <property type="term" value="C:cytoplasm"/>
    <property type="evidence" value="ECO:0007669"/>
    <property type="project" value="UniProtKB-SubCell"/>
</dbReference>
<dbReference type="GO" id="GO:0009379">
    <property type="term" value="C:Holliday junction helicase complex"/>
    <property type="evidence" value="ECO:0007669"/>
    <property type="project" value="InterPro"/>
</dbReference>
<dbReference type="GO" id="GO:0048476">
    <property type="term" value="C:Holliday junction resolvase complex"/>
    <property type="evidence" value="ECO:0007669"/>
    <property type="project" value="UniProtKB-UniRule"/>
</dbReference>
<dbReference type="GO" id="GO:0005524">
    <property type="term" value="F:ATP binding"/>
    <property type="evidence" value="ECO:0007669"/>
    <property type="project" value="InterPro"/>
</dbReference>
<dbReference type="GO" id="GO:0000400">
    <property type="term" value="F:four-way junction DNA binding"/>
    <property type="evidence" value="ECO:0007669"/>
    <property type="project" value="UniProtKB-UniRule"/>
</dbReference>
<dbReference type="GO" id="GO:0009378">
    <property type="term" value="F:four-way junction helicase activity"/>
    <property type="evidence" value="ECO:0007669"/>
    <property type="project" value="InterPro"/>
</dbReference>
<dbReference type="GO" id="GO:0006310">
    <property type="term" value="P:DNA recombination"/>
    <property type="evidence" value="ECO:0007669"/>
    <property type="project" value="UniProtKB-UniRule"/>
</dbReference>
<dbReference type="GO" id="GO:0006281">
    <property type="term" value="P:DNA repair"/>
    <property type="evidence" value="ECO:0007669"/>
    <property type="project" value="UniProtKB-UniRule"/>
</dbReference>
<dbReference type="CDD" id="cd14332">
    <property type="entry name" value="UBA_RuvA_C"/>
    <property type="match status" value="1"/>
</dbReference>
<dbReference type="Gene3D" id="1.10.150.20">
    <property type="entry name" value="5' to 3' exonuclease, C-terminal subdomain"/>
    <property type="match status" value="1"/>
</dbReference>
<dbReference type="Gene3D" id="1.10.8.10">
    <property type="entry name" value="DNA helicase RuvA subunit, C-terminal domain"/>
    <property type="match status" value="1"/>
</dbReference>
<dbReference type="Gene3D" id="2.40.50.140">
    <property type="entry name" value="Nucleic acid-binding proteins"/>
    <property type="match status" value="1"/>
</dbReference>
<dbReference type="HAMAP" id="MF_00031">
    <property type="entry name" value="DNA_HJ_migration_RuvA"/>
    <property type="match status" value="1"/>
</dbReference>
<dbReference type="InterPro" id="IPR013849">
    <property type="entry name" value="DNA_helicase_Holl-junc_RuvA_I"/>
</dbReference>
<dbReference type="InterPro" id="IPR003583">
    <property type="entry name" value="Hlx-hairpin-Hlx_DNA-bd_motif"/>
</dbReference>
<dbReference type="InterPro" id="IPR012340">
    <property type="entry name" value="NA-bd_OB-fold"/>
</dbReference>
<dbReference type="InterPro" id="IPR000085">
    <property type="entry name" value="RuvA"/>
</dbReference>
<dbReference type="InterPro" id="IPR010994">
    <property type="entry name" value="RuvA_2-like"/>
</dbReference>
<dbReference type="InterPro" id="IPR011114">
    <property type="entry name" value="RuvA_C"/>
</dbReference>
<dbReference type="InterPro" id="IPR036267">
    <property type="entry name" value="RuvA_C_sf"/>
</dbReference>
<dbReference type="NCBIfam" id="TIGR00084">
    <property type="entry name" value="ruvA"/>
    <property type="match status" value="1"/>
</dbReference>
<dbReference type="Pfam" id="PF14520">
    <property type="entry name" value="HHH_5"/>
    <property type="match status" value="1"/>
</dbReference>
<dbReference type="Pfam" id="PF07499">
    <property type="entry name" value="RuvA_C"/>
    <property type="match status" value="1"/>
</dbReference>
<dbReference type="Pfam" id="PF01330">
    <property type="entry name" value="RuvA_N"/>
    <property type="match status" value="1"/>
</dbReference>
<dbReference type="SMART" id="SM00278">
    <property type="entry name" value="HhH1"/>
    <property type="match status" value="2"/>
</dbReference>
<dbReference type="SUPFAM" id="SSF46929">
    <property type="entry name" value="DNA helicase RuvA subunit, C-terminal domain"/>
    <property type="match status" value="1"/>
</dbReference>
<dbReference type="SUPFAM" id="SSF50249">
    <property type="entry name" value="Nucleic acid-binding proteins"/>
    <property type="match status" value="1"/>
</dbReference>
<dbReference type="SUPFAM" id="SSF47781">
    <property type="entry name" value="RuvA domain 2-like"/>
    <property type="match status" value="1"/>
</dbReference>
<feature type="chain" id="PRO_1000002416" description="Holliday junction branch migration complex subunit RuvA">
    <location>
        <begin position="1"/>
        <end position="193"/>
    </location>
</feature>
<feature type="region of interest" description="Domain I" evidence="1">
    <location>
        <begin position="1"/>
        <end position="64"/>
    </location>
</feature>
<feature type="region of interest" description="Domain II" evidence="1">
    <location>
        <begin position="65"/>
        <end position="139"/>
    </location>
</feature>
<feature type="region of interest" description="Flexible linker" evidence="1">
    <location>
        <begin position="139"/>
        <end position="143"/>
    </location>
</feature>
<feature type="region of interest" description="Domain III" evidence="1">
    <location>
        <begin position="144"/>
        <end position="193"/>
    </location>
</feature>
<keyword id="KW-0963">Cytoplasm</keyword>
<keyword id="KW-0227">DNA damage</keyword>
<keyword id="KW-0233">DNA recombination</keyword>
<keyword id="KW-0234">DNA repair</keyword>
<keyword id="KW-0238">DNA-binding</keyword>
<evidence type="ECO:0000255" key="1">
    <source>
        <dbReference type="HAMAP-Rule" id="MF_00031"/>
    </source>
</evidence>